<keyword id="KW-0687">Ribonucleoprotein</keyword>
<keyword id="KW-0689">Ribosomal protein</keyword>
<keyword id="KW-0694">RNA-binding</keyword>
<keyword id="KW-0699">rRNA-binding</keyword>
<proteinExistence type="inferred from homology"/>
<reference key="1">
    <citation type="submission" date="2006-09" db="EMBL/GenBank/DDBJ databases">
        <authorList>
            <consortium name="The Klebsiella pneumonia Genome Sequencing Project"/>
            <person name="McClelland M."/>
            <person name="Sanderson E.K."/>
            <person name="Spieth J."/>
            <person name="Clifton W.S."/>
            <person name="Latreille P."/>
            <person name="Sabo A."/>
            <person name="Pepin K."/>
            <person name="Bhonagiri V."/>
            <person name="Porwollik S."/>
            <person name="Ali J."/>
            <person name="Wilson R.K."/>
        </authorList>
    </citation>
    <scope>NUCLEOTIDE SEQUENCE [LARGE SCALE GENOMIC DNA]</scope>
    <source>
        <strain>ATCC 700721 / MGH 78578</strain>
    </source>
</reference>
<feature type="chain" id="PRO_1000055244" description="Large ribosomal subunit protein uL6">
    <location>
        <begin position="1"/>
        <end position="177"/>
    </location>
</feature>
<comment type="function">
    <text evidence="1">This protein binds to the 23S rRNA, and is important in its secondary structure. It is located near the subunit interface in the base of the L7/L12 stalk, and near the tRNA binding site of the peptidyltransferase center.</text>
</comment>
<comment type="subunit">
    <text evidence="1">Part of the 50S ribosomal subunit.</text>
</comment>
<comment type="similarity">
    <text evidence="1">Belongs to the universal ribosomal protein uL6 family.</text>
</comment>
<organism>
    <name type="scientific">Klebsiella pneumoniae subsp. pneumoniae (strain ATCC 700721 / MGH 78578)</name>
    <dbReference type="NCBI Taxonomy" id="272620"/>
    <lineage>
        <taxon>Bacteria</taxon>
        <taxon>Pseudomonadati</taxon>
        <taxon>Pseudomonadota</taxon>
        <taxon>Gammaproteobacteria</taxon>
        <taxon>Enterobacterales</taxon>
        <taxon>Enterobacteriaceae</taxon>
        <taxon>Klebsiella/Raoultella group</taxon>
        <taxon>Klebsiella</taxon>
        <taxon>Klebsiella pneumoniae complex</taxon>
    </lineage>
</organism>
<protein>
    <recommendedName>
        <fullName evidence="1">Large ribosomal subunit protein uL6</fullName>
    </recommendedName>
    <alternativeName>
        <fullName evidence="2">50S ribosomal protein L6</fullName>
    </alternativeName>
</protein>
<evidence type="ECO:0000255" key="1">
    <source>
        <dbReference type="HAMAP-Rule" id="MF_01365"/>
    </source>
</evidence>
<evidence type="ECO:0000305" key="2"/>
<accession>A6TEV7</accession>
<name>RL6_KLEP7</name>
<gene>
    <name evidence="1" type="primary">rplF</name>
    <name type="ordered locus">KPN78578_36670</name>
    <name type="ORF">KPN_03704</name>
</gene>
<sequence length="177" mass="18844">MSRVAKAPVVVPAGVDVKINGQVITIKGKNGELTRTLNDAVEVKHADNALTFGPRDGYADGWAQAGTARALLNSMVIGVTEGFTKKLQLVGVGYRAAVKGNVVNLALGFSHPVDHQLPAGITAECPTQTEIVLKGADKQVIGQVAADLRAYRRPEPYKGKGVRYADEVVRTKEAKKK</sequence>
<dbReference type="EMBL" id="CP000647">
    <property type="protein sequence ID" value="ABR79091.1"/>
    <property type="molecule type" value="Genomic_DNA"/>
</dbReference>
<dbReference type="RefSeq" id="WP_002919662.1">
    <property type="nucleotide sequence ID" value="NC_009648.1"/>
</dbReference>
<dbReference type="SMR" id="A6TEV7"/>
<dbReference type="STRING" id="272620.KPN_03704"/>
<dbReference type="jPOST" id="A6TEV7"/>
<dbReference type="PaxDb" id="272620-KPN_03704"/>
<dbReference type="EnsemblBacteria" id="ABR79091">
    <property type="protein sequence ID" value="ABR79091"/>
    <property type="gene ID" value="KPN_03704"/>
</dbReference>
<dbReference type="GeneID" id="93251032"/>
<dbReference type="KEGG" id="kpn:KPN_03704"/>
<dbReference type="HOGENOM" id="CLU_065464_1_2_6"/>
<dbReference type="Proteomes" id="UP000000265">
    <property type="component" value="Chromosome"/>
</dbReference>
<dbReference type="GO" id="GO:0022625">
    <property type="term" value="C:cytosolic large ribosomal subunit"/>
    <property type="evidence" value="ECO:0007669"/>
    <property type="project" value="TreeGrafter"/>
</dbReference>
<dbReference type="GO" id="GO:0019843">
    <property type="term" value="F:rRNA binding"/>
    <property type="evidence" value="ECO:0007669"/>
    <property type="project" value="UniProtKB-UniRule"/>
</dbReference>
<dbReference type="GO" id="GO:0003735">
    <property type="term" value="F:structural constituent of ribosome"/>
    <property type="evidence" value="ECO:0007669"/>
    <property type="project" value="InterPro"/>
</dbReference>
<dbReference type="GO" id="GO:0002181">
    <property type="term" value="P:cytoplasmic translation"/>
    <property type="evidence" value="ECO:0007669"/>
    <property type="project" value="TreeGrafter"/>
</dbReference>
<dbReference type="FunFam" id="3.90.930.12:FF:000001">
    <property type="entry name" value="50S ribosomal protein L6"/>
    <property type="match status" value="1"/>
</dbReference>
<dbReference type="FunFam" id="3.90.930.12:FF:000002">
    <property type="entry name" value="50S ribosomal protein L6"/>
    <property type="match status" value="1"/>
</dbReference>
<dbReference type="Gene3D" id="3.90.930.12">
    <property type="entry name" value="Ribosomal protein L6, alpha-beta domain"/>
    <property type="match status" value="2"/>
</dbReference>
<dbReference type="HAMAP" id="MF_01365_B">
    <property type="entry name" value="Ribosomal_uL6_B"/>
    <property type="match status" value="1"/>
</dbReference>
<dbReference type="InterPro" id="IPR000702">
    <property type="entry name" value="Ribosomal_uL6-like"/>
</dbReference>
<dbReference type="InterPro" id="IPR036789">
    <property type="entry name" value="Ribosomal_uL6-like_a/b-dom_sf"/>
</dbReference>
<dbReference type="InterPro" id="IPR020040">
    <property type="entry name" value="Ribosomal_uL6_a/b-dom"/>
</dbReference>
<dbReference type="InterPro" id="IPR019906">
    <property type="entry name" value="Ribosomal_uL6_bac-type"/>
</dbReference>
<dbReference type="InterPro" id="IPR002358">
    <property type="entry name" value="Ribosomal_uL6_CS"/>
</dbReference>
<dbReference type="NCBIfam" id="TIGR03654">
    <property type="entry name" value="L6_bact"/>
    <property type="match status" value="1"/>
</dbReference>
<dbReference type="PANTHER" id="PTHR11655">
    <property type="entry name" value="60S/50S RIBOSOMAL PROTEIN L6/L9"/>
    <property type="match status" value="1"/>
</dbReference>
<dbReference type="PANTHER" id="PTHR11655:SF14">
    <property type="entry name" value="LARGE RIBOSOMAL SUBUNIT PROTEIN UL6M"/>
    <property type="match status" value="1"/>
</dbReference>
<dbReference type="Pfam" id="PF00347">
    <property type="entry name" value="Ribosomal_L6"/>
    <property type="match status" value="2"/>
</dbReference>
<dbReference type="PIRSF" id="PIRSF002162">
    <property type="entry name" value="Ribosomal_L6"/>
    <property type="match status" value="1"/>
</dbReference>
<dbReference type="PRINTS" id="PR00059">
    <property type="entry name" value="RIBOSOMALL6"/>
</dbReference>
<dbReference type="SUPFAM" id="SSF56053">
    <property type="entry name" value="Ribosomal protein L6"/>
    <property type="match status" value="2"/>
</dbReference>
<dbReference type="PROSITE" id="PS00525">
    <property type="entry name" value="RIBOSOMAL_L6_1"/>
    <property type="match status" value="1"/>
</dbReference>